<protein>
    <recommendedName>
        <fullName evidence="9">CTP synthase 1</fullName>
        <ecNumber evidence="5 6">6.3.4.2</ecNumber>
    </recommendedName>
    <alternativeName>
        <fullName>CTP synthetase 1</fullName>
    </alternativeName>
    <alternativeName>
        <fullName>UTP--ammonia ligase 1</fullName>
    </alternativeName>
</protein>
<evidence type="ECO:0000250" key="1"/>
<evidence type="ECO:0000250" key="2">
    <source>
        <dbReference type="UniProtKB" id="P70698"/>
    </source>
</evidence>
<evidence type="ECO:0000256" key="3">
    <source>
        <dbReference type="SAM" id="MobiDB-lite"/>
    </source>
</evidence>
<evidence type="ECO:0000269" key="4">
    <source>
    </source>
</evidence>
<evidence type="ECO:0000269" key="5">
    <source>
    </source>
</evidence>
<evidence type="ECO:0000269" key="6">
    <source>
    </source>
</evidence>
<evidence type="ECO:0000269" key="7">
    <source>
    </source>
</evidence>
<evidence type="ECO:0000303" key="8">
    <source>
    </source>
</evidence>
<evidence type="ECO:0000305" key="9"/>
<evidence type="ECO:0000312" key="10">
    <source>
        <dbReference type="HGNC" id="HGNC:2519"/>
    </source>
</evidence>
<evidence type="ECO:0007744" key="11">
    <source>
    </source>
</evidence>
<evidence type="ECO:0007744" key="12">
    <source>
    </source>
</evidence>
<evidence type="ECO:0007744" key="13">
    <source>
    </source>
</evidence>
<evidence type="ECO:0007744" key="14">
    <source>
    </source>
</evidence>
<evidence type="ECO:0007744" key="15">
    <source>
    </source>
</evidence>
<evidence type="ECO:0007744" key="16">
    <source>
    </source>
</evidence>
<evidence type="ECO:0007829" key="17">
    <source>
        <dbReference type="PDB" id="2VO1"/>
    </source>
</evidence>
<evidence type="ECO:0007829" key="18">
    <source>
        <dbReference type="PDB" id="7MGZ"/>
    </source>
</evidence>
<evidence type="ECO:0007829" key="19">
    <source>
        <dbReference type="PDB" id="7MIG"/>
    </source>
</evidence>
<feature type="chain" id="PRO_0000138275" description="CTP synthase 1">
    <location>
        <begin position="1"/>
        <end position="591"/>
    </location>
</feature>
<feature type="domain" description="Glutamine amidotransferase type-1">
    <location>
        <begin position="300"/>
        <end position="554"/>
    </location>
</feature>
<feature type="region of interest" description="Disordered" evidence="3">
    <location>
        <begin position="562"/>
        <end position="591"/>
    </location>
</feature>
<feature type="compositionally biased region" description="Low complexity" evidence="3">
    <location>
        <begin position="569"/>
        <end position="578"/>
    </location>
</feature>
<feature type="active site" description="For GATase activity" evidence="1">
    <location>
        <position position="399"/>
    </location>
</feature>
<feature type="active site" description="For GATase activity" evidence="1">
    <location>
        <position position="526"/>
    </location>
</feature>
<feature type="active site" description="For GATase activity" evidence="1">
    <location>
        <position position="528"/>
    </location>
</feature>
<feature type="modified residue" description="N6-acetyllysine" evidence="12">
    <location>
        <position position="100"/>
    </location>
</feature>
<feature type="modified residue" description="Phosphoserine" evidence="15">
    <location>
        <position position="562"/>
    </location>
</feature>
<feature type="modified residue" description="Phosphoserine" evidence="11">
    <location>
        <position position="568"/>
    </location>
</feature>
<feature type="modified residue" description="Phosphoserine" evidence="11 13">
    <location>
        <position position="571"/>
    </location>
</feature>
<feature type="modified residue" description="Phosphoserine" evidence="11 15">
    <location>
        <position position="573"/>
    </location>
</feature>
<feature type="modified residue" description="Phosphoserine" evidence="11 13 14">
    <location>
        <position position="574"/>
    </location>
</feature>
<feature type="modified residue" description="Phosphoserine" evidence="11 13 14 15 16">
    <location>
        <position position="575"/>
    </location>
</feature>
<feature type="modified residue" description="Phosphoserine" evidence="2">
    <location>
        <position position="578"/>
    </location>
</feature>
<feature type="modified residue" description="Phosphoserine" evidence="11">
    <location>
        <position position="587"/>
    </location>
</feature>
<feature type="splice variant" id="VSP_055827" description="In isoform 2." evidence="8">
    <location>
        <begin position="1"/>
        <end position="231"/>
    </location>
</feature>
<feature type="sequence variant" id="VAR_027055" description="In dbSNP:rs17856308." evidence="4">
    <original>S</original>
    <variation>I</variation>
    <location>
        <position position="571"/>
    </location>
</feature>
<feature type="mutagenesis site" description="Localizes to cystolic filament structures." evidence="7">
    <original>E</original>
    <variation>K</variation>
    <location>
        <position position="161"/>
    </location>
</feature>
<feature type="sequence conflict" description="In Ref. 1; CAA36386." evidence="9" ref="1">
    <original>G</original>
    <variation>A</variation>
    <location>
        <position position="305"/>
    </location>
</feature>
<feature type="sequence conflict" description="In Ref. 1; CAA36386." evidence="9" ref="1">
    <original>K</original>
    <variation>E</variation>
    <location>
        <position position="309"/>
    </location>
</feature>
<feature type="strand" evidence="17">
    <location>
        <begin position="2"/>
        <end position="8"/>
    </location>
</feature>
<feature type="strand" evidence="17">
    <location>
        <begin position="10"/>
        <end position="15"/>
    </location>
</feature>
<feature type="helix" evidence="17">
    <location>
        <begin position="16"/>
        <end position="29"/>
    </location>
</feature>
<feature type="strand" evidence="17">
    <location>
        <begin position="34"/>
        <end position="40"/>
    </location>
</feature>
<feature type="strand" evidence="18">
    <location>
        <begin position="45"/>
        <end position="47"/>
    </location>
</feature>
<feature type="strand" evidence="18">
    <location>
        <begin position="54"/>
        <end position="56"/>
    </location>
</feature>
<feature type="helix" evidence="18">
    <location>
        <begin position="70"/>
        <end position="78"/>
    </location>
</feature>
<feature type="helix" evidence="18">
    <location>
        <begin position="84"/>
        <end position="86"/>
    </location>
</feature>
<feature type="strand" evidence="17">
    <location>
        <begin position="87"/>
        <end position="89"/>
    </location>
</feature>
<feature type="helix" evidence="17">
    <location>
        <begin position="90"/>
        <end position="102"/>
    </location>
</feature>
<feature type="turn" evidence="17">
    <location>
        <begin position="103"/>
        <end position="108"/>
    </location>
</feature>
<feature type="helix" evidence="17">
    <location>
        <begin position="113"/>
        <end position="130"/>
    </location>
</feature>
<feature type="strand" evidence="17">
    <location>
        <begin position="134"/>
        <end position="136"/>
    </location>
</feature>
<feature type="strand" evidence="17">
    <location>
        <begin position="141"/>
        <end position="147"/>
    </location>
</feature>
<feature type="helix" evidence="17">
    <location>
        <begin position="154"/>
        <end position="156"/>
    </location>
</feature>
<feature type="helix" evidence="17">
    <location>
        <begin position="157"/>
        <end position="169"/>
    </location>
</feature>
<feature type="helix" evidence="17">
    <location>
        <begin position="172"/>
        <end position="174"/>
    </location>
</feature>
<feature type="strand" evidence="17">
    <location>
        <begin position="175"/>
        <end position="182"/>
    </location>
</feature>
<feature type="turn" evidence="18">
    <location>
        <begin position="187"/>
        <end position="189"/>
    </location>
</feature>
<feature type="helix" evidence="17">
    <location>
        <begin position="195"/>
        <end position="207"/>
    </location>
</feature>
<feature type="strand" evidence="17">
    <location>
        <begin position="212"/>
        <end position="217"/>
    </location>
</feature>
<feature type="helix" evidence="17">
    <location>
        <begin position="224"/>
        <end position="233"/>
    </location>
</feature>
<feature type="helix" evidence="17">
    <location>
        <begin position="238"/>
        <end position="240"/>
    </location>
</feature>
<feature type="strand" evidence="17">
    <location>
        <begin position="241"/>
        <end position="244"/>
    </location>
</feature>
<feature type="helix" evidence="17">
    <location>
        <begin position="250"/>
        <end position="252"/>
    </location>
</feature>
<feature type="helix" evidence="17">
    <location>
        <begin position="253"/>
        <end position="259"/>
    </location>
</feature>
<feature type="helix" evidence="17">
    <location>
        <begin position="262"/>
        <end position="270"/>
    </location>
</feature>
<feature type="helix" evidence="18">
    <location>
        <begin position="282"/>
        <end position="294"/>
    </location>
</feature>
<feature type="strand" evidence="18">
    <location>
        <begin position="297"/>
        <end position="307"/>
    </location>
</feature>
<feature type="helix" evidence="18">
    <location>
        <begin position="311"/>
        <end position="314"/>
    </location>
</feature>
<feature type="helix" evidence="18">
    <location>
        <begin position="315"/>
        <end position="327"/>
    </location>
</feature>
<feature type="strand" evidence="18">
    <location>
        <begin position="331"/>
        <end position="338"/>
    </location>
</feature>
<feature type="helix" evidence="18">
    <location>
        <begin position="339"/>
        <end position="342"/>
    </location>
</feature>
<feature type="helix" evidence="18">
    <location>
        <begin position="346"/>
        <end position="348"/>
    </location>
</feature>
<feature type="helix" evidence="18">
    <location>
        <begin position="351"/>
        <end position="363"/>
    </location>
</feature>
<feature type="strand" evidence="18">
    <location>
        <begin position="365"/>
        <end position="369"/>
    </location>
</feature>
<feature type="helix" evidence="18">
    <location>
        <begin position="378"/>
        <end position="390"/>
    </location>
</feature>
<feature type="strand" evidence="18">
    <location>
        <begin position="395"/>
        <end position="398"/>
    </location>
</feature>
<feature type="helix" evidence="18">
    <location>
        <begin position="400"/>
        <end position="412"/>
    </location>
</feature>
<feature type="turn" evidence="18">
    <location>
        <begin position="422"/>
        <end position="424"/>
    </location>
</feature>
<feature type="strand" evidence="18">
    <location>
        <begin position="429"/>
        <end position="435"/>
    </location>
</feature>
<feature type="strand" evidence="18">
    <location>
        <begin position="451"/>
        <end position="458"/>
    </location>
</feature>
<feature type="helix" evidence="18">
    <location>
        <begin position="463"/>
        <end position="467"/>
    </location>
</feature>
<feature type="turn" evidence="19">
    <location>
        <begin position="468"/>
        <end position="470"/>
    </location>
</feature>
<feature type="strand" evidence="18">
    <location>
        <begin position="472"/>
        <end position="478"/>
    </location>
</feature>
<feature type="strand" evidence="18">
    <location>
        <begin position="481"/>
        <end position="484"/>
    </location>
</feature>
<feature type="turn" evidence="18">
    <location>
        <begin position="486"/>
        <end position="488"/>
    </location>
</feature>
<feature type="helix" evidence="18">
    <location>
        <begin position="489"/>
        <end position="493"/>
    </location>
</feature>
<feature type="turn" evidence="18">
    <location>
        <begin position="494"/>
        <end position="496"/>
    </location>
</feature>
<feature type="strand" evidence="18">
    <location>
        <begin position="497"/>
        <end position="503"/>
    </location>
</feature>
<feature type="strand" evidence="18">
    <location>
        <begin position="508"/>
        <end position="514"/>
    </location>
</feature>
<feature type="strand" evidence="18">
    <location>
        <begin position="517"/>
        <end position="525"/>
    </location>
</feature>
<feature type="helix" evidence="18">
    <location>
        <begin position="527"/>
        <end position="530"/>
    </location>
</feature>
<feature type="helix" evidence="18">
    <location>
        <begin position="538"/>
        <end position="547"/>
    </location>
</feature>
<feature type="turn" evidence="18">
    <location>
        <begin position="548"/>
        <end position="550"/>
    </location>
</feature>
<feature type="helix" evidence="18">
    <location>
        <begin position="551"/>
        <end position="554"/>
    </location>
</feature>
<gene>
    <name evidence="10" type="primary">CTPS1</name>
    <name evidence="10" type="synonym">CTPS</name>
</gene>
<sequence>MKYILVTGGVISGIGKGIIASSVGTILKSCGLHVTSIKIDPYINIDAGTFSPYEHGEVFVLDDGGEVDLDLGNYERFLDIRLTKDNNLTTGKIYQYVINKERKGDYLGKTVQVVPHITDAIQEWVMRQALIPVDEDGLEPQVCVIELGGTVGDIESMPFIEAFRQFQFKVKRENFCNIHVSLVPQPSSTGEQKTKPTQNSVRELRGLGLSPDLVVCRCSNPLDTSVKEKISMFCHVEPEQVICVHDVSSIYRVPLLLEEQGVVDYFLRRLDLPIERQPRKMLMKWKEMADRYDRLLETCSIALVGKYTKFSDSYASVIKALEHSALAINHKLEIKYIDSADLEPITSQEEPVRYHEAWQKLCSAHGVLVPGGFGVRGTEGKIQAIAWARNQKKPFLGVCLGMQLAVVEFSRNVLGWQDANSTEFDPTTSHPVVVDMPEHNPGQMGGTMRLGKRRTLFQTKNSVMRKLYGDADYLEERHRHRFEVNPVWKKCLEEQGLKFVGQDVEGERMEIVELEDHPFFVGVQYHPEFLSRPIKPSPPYFGLLLASVGRLSHYLQKGCRLSPRDTYSDRSGSSSPDSEITELKFPSINHD</sequence>
<dbReference type="EC" id="6.3.4.2" evidence="5 6"/>
<dbReference type="EMBL" id="X52142">
    <property type="protein sequence ID" value="CAA36386.1"/>
    <property type="molecule type" value="mRNA"/>
</dbReference>
<dbReference type="EMBL" id="AK299122">
    <property type="protein sequence ID" value="BAG61176.1"/>
    <property type="molecule type" value="mRNA"/>
</dbReference>
<dbReference type="EMBL" id="AL391730">
    <property type="status" value="NOT_ANNOTATED_CDS"/>
    <property type="molecule type" value="Genomic_DNA"/>
</dbReference>
<dbReference type="EMBL" id="CH471059">
    <property type="protein sequence ID" value="EAX07192.1"/>
    <property type="molecule type" value="Genomic_DNA"/>
</dbReference>
<dbReference type="EMBL" id="CH471059">
    <property type="protein sequence ID" value="EAX07193.1"/>
    <property type="molecule type" value="Genomic_DNA"/>
</dbReference>
<dbReference type="EMBL" id="BC009408">
    <property type="protein sequence ID" value="AAH09408.1"/>
    <property type="molecule type" value="mRNA"/>
</dbReference>
<dbReference type="CCDS" id="CCDS459.1">
    <molecule id="P17812-1"/>
</dbReference>
<dbReference type="PIR" id="S12791">
    <property type="entry name" value="SYHUTP"/>
</dbReference>
<dbReference type="RefSeq" id="NP_001288166.1">
    <property type="nucleotide sequence ID" value="NM_001301237.1"/>
</dbReference>
<dbReference type="RefSeq" id="NP_001896.2">
    <molecule id="P17812-1"/>
    <property type="nucleotide sequence ID" value="NM_001905.4"/>
</dbReference>
<dbReference type="RefSeq" id="XP_024309321.1">
    <molecule id="P17812-1"/>
    <property type="nucleotide sequence ID" value="XM_024453553.2"/>
</dbReference>
<dbReference type="RefSeq" id="XP_024309322.1">
    <molecule id="P17812-1"/>
    <property type="nucleotide sequence ID" value="XM_024453554.1"/>
</dbReference>
<dbReference type="RefSeq" id="XP_054190668.1">
    <molecule id="P17812-1"/>
    <property type="nucleotide sequence ID" value="XM_054334693.1"/>
</dbReference>
<dbReference type="RefSeq" id="XP_054190669.1">
    <molecule id="P17812-1"/>
    <property type="nucleotide sequence ID" value="XM_054334694.1"/>
</dbReference>
<dbReference type="PDB" id="2VO1">
    <property type="method" value="X-ray"/>
    <property type="resolution" value="2.80 A"/>
    <property type="chains" value="A/B=1-273"/>
</dbReference>
<dbReference type="PDB" id="5U03">
    <property type="method" value="EM"/>
    <property type="resolution" value="6.10 A"/>
    <property type="chains" value="A/B/C/D=1-591"/>
</dbReference>
<dbReference type="PDB" id="7MGZ">
    <property type="method" value="EM"/>
    <property type="resolution" value="2.80 A"/>
    <property type="chains" value="F/O/P/Q=1-591"/>
</dbReference>
<dbReference type="PDB" id="7MH0">
    <property type="method" value="EM"/>
    <property type="resolution" value="6.20 A"/>
    <property type="chains" value="A/B/C/D=1-591"/>
</dbReference>
<dbReference type="PDB" id="7MIF">
    <property type="method" value="EM"/>
    <property type="resolution" value="3.10 A"/>
    <property type="chains" value="C/G/H/I=1-591"/>
</dbReference>
<dbReference type="PDB" id="7MIG">
    <property type="method" value="EM"/>
    <property type="resolution" value="2.90 A"/>
    <property type="chains" value="A/B/C/E=1-591"/>
</dbReference>
<dbReference type="PDBsum" id="2VO1"/>
<dbReference type="PDBsum" id="5U03"/>
<dbReference type="PDBsum" id="7MGZ"/>
<dbReference type="PDBsum" id="7MH0"/>
<dbReference type="PDBsum" id="7MIF"/>
<dbReference type="PDBsum" id="7MIG"/>
<dbReference type="EMDB" id="EMD-23831"/>
<dbReference type="EMDB" id="EMD-23832"/>
<dbReference type="EMDB" id="EMD-23848"/>
<dbReference type="EMDB" id="EMD-23850"/>
<dbReference type="EMDB" id="EMD-8474"/>
<dbReference type="EMDB" id="EMD-8476"/>
<dbReference type="SMR" id="P17812"/>
<dbReference type="BioGRID" id="107883">
    <property type="interactions" value="201"/>
</dbReference>
<dbReference type="FunCoup" id="P17812">
    <property type="interactions" value="1062"/>
</dbReference>
<dbReference type="IntAct" id="P17812">
    <property type="interactions" value="56"/>
</dbReference>
<dbReference type="MINT" id="P17812"/>
<dbReference type="STRING" id="9606.ENSP00000497744"/>
<dbReference type="BindingDB" id="P17812"/>
<dbReference type="ChEMBL" id="CHEMBL5291523"/>
<dbReference type="DrugBank" id="DB00130">
    <property type="generic name" value="L-Glutamine"/>
</dbReference>
<dbReference type="GuidetoPHARMACOLOGY" id="3215"/>
<dbReference type="MEROPS" id="C26.A36"/>
<dbReference type="GlyConnect" id="2032">
    <property type="glycosylation" value="1 N-Linked glycan (1 site)"/>
</dbReference>
<dbReference type="GlyCosmos" id="P17812">
    <property type="glycosylation" value="1 site, 2 glycans"/>
</dbReference>
<dbReference type="GlyGen" id="P17812">
    <property type="glycosylation" value="2 sites, 2 N-linked glycans (1 site), 1 O-linked glycan (1 site)"/>
</dbReference>
<dbReference type="iPTMnet" id="P17812"/>
<dbReference type="PhosphoSitePlus" id="P17812"/>
<dbReference type="SwissPalm" id="P17812"/>
<dbReference type="BioMuta" id="CTPS1"/>
<dbReference type="DMDM" id="20981706"/>
<dbReference type="jPOST" id="P17812"/>
<dbReference type="MassIVE" id="P17812"/>
<dbReference type="PaxDb" id="9606-ENSP00000361704"/>
<dbReference type="PeptideAtlas" id="P17812"/>
<dbReference type="ProteomicsDB" id="4927"/>
<dbReference type="ProteomicsDB" id="53516">
    <molecule id="P17812-1"/>
</dbReference>
<dbReference type="Pumba" id="P17812"/>
<dbReference type="Antibodypedia" id="4476">
    <property type="antibodies" value="187 antibodies from 32 providers"/>
</dbReference>
<dbReference type="DNASU" id="1503"/>
<dbReference type="Ensembl" id="ENST00000372616.1">
    <molecule id="P17812-1"/>
    <property type="protein sequence ID" value="ENSP00000361699.1"/>
    <property type="gene ID" value="ENSG00000171793.17"/>
</dbReference>
<dbReference type="Ensembl" id="ENST00000470271.6">
    <molecule id="P17812-1"/>
    <property type="protein sequence ID" value="ENSP00000497901.2"/>
    <property type="gene ID" value="ENSG00000171793.17"/>
</dbReference>
<dbReference type="Ensembl" id="ENST00000649124.2">
    <molecule id="P17812-1"/>
    <property type="protein sequence ID" value="ENSP00000497744.1"/>
    <property type="gene ID" value="ENSG00000171793.17"/>
</dbReference>
<dbReference type="Ensembl" id="ENST00000650070.2">
    <molecule id="P17812-1"/>
    <property type="protein sequence ID" value="ENSP00000497602.1"/>
    <property type="gene ID" value="ENSG00000171793.17"/>
</dbReference>
<dbReference type="Ensembl" id="ENST00000696070.1">
    <molecule id="P17812-2"/>
    <property type="protein sequence ID" value="ENSP00000512372.1"/>
    <property type="gene ID" value="ENSG00000171793.17"/>
</dbReference>
<dbReference type="GeneID" id="1503"/>
<dbReference type="KEGG" id="hsa:1503"/>
<dbReference type="MANE-Select" id="ENST00000650070.2">
    <property type="protein sequence ID" value="ENSP00000497602.1"/>
    <property type="RefSeq nucleotide sequence ID" value="NM_001905.4"/>
    <property type="RefSeq protein sequence ID" value="NP_001896.2"/>
</dbReference>
<dbReference type="UCSC" id="uc001cgk.5">
    <molecule id="P17812-1"/>
    <property type="organism name" value="human"/>
</dbReference>
<dbReference type="AGR" id="HGNC:2519"/>
<dbReference type="CTD" id="1503"/>
<dbReference type="DisGeNET" id="1503"/>
<dbReference type="GeneCards" id="CTPS1"/>
<dbReference type="HGNC" id="HGNC:2519">
    <property type="gene designation" value="CTPS1"/>
</dbReference>
<dbReference type="HPA" id="ENSG00000171793">
    <property type="expression patterns" value="Low tissue specificity"/>
</dbReference>
<dbReference type="MalaCards" id="CTPS1"/>
<dbReference type="MIM" id="123860">
    <property type="type" value="gene"/>
</dbReference>
<dbReference type="MIM" id="615897">
    <property type="type" value="phenotype"/>
</dbReference>
<dbReference type="neXtProt" id="NX_P17812"/>
<dbReference type="OpenTargets" id="ENSG00000171793"/>
<dbReference type="Orphanet" id="420573">
    <property type="disease" value="Severe combined immunodeficiency due to CTPS1 deficiency"/>
</dbReference>
<dbReference type="PharmGKB" id="PA27020"/>
<dbReference type="VEuPathDB" id="HostDB:ENSG00000171793"/>
<dbReference type="eggNOG" id="KOG2387">
    <property type="taxonomic scope" value="Eukaryota"/>
</dbReference>
<dbReference type="GeneTree" id="ENSGT00910000144179"/>
<dbReference type="HOGENOM" id="CLU_011675_5_0_1"/>
<dbReference type="InParanoid" id="P17812"/>
<dbReference type="OMA" id="EFNNAYR"/>
<dbReference type="OrthoDB" id="1739076at2759"/>
<dbReference type="PAN-GO" id="P17812">
    <property type="GO annotations" value="6 GO annotations based on evolutionary models"/>
</dbReference>
<dbReference type="PhylomeDB" id="P17812"/>
<dbReference type="TreeFam" id="TF300379"/>
<dbReference type="BioCyc" id="MetaCyc:HS10382-MONOMER"/>
<dbReference type="PathwayCommons" id="P17812"/>
<dbReference type="Reactome" id="R-HSA-499943">
    <property type="pathway name" value="Interconversion of nucleotide di- and triphosphates"/>
</dbReference>
<dbReference type="SignaLink" id="P17812"/>
<dbReference type="SIGNOR" id="P17812"/>
<dbReference type="UniPathway" id="UPA00159">
    <property type="reaction ID" value="UER00277"/>
</dbReference>
<dbReference type="BioGRID-ORCS" id="1503">
    <property type="hits" value="429 hits in 1163 CRISPR screens"/>
</dbReference>
<dbReference type="CD-CODE" id="91857CE7">
    <property type="entry name" value="Nucleolus"/>
</dbReference>
<dbReference type="ChiTaRS" id="CTPS1">
    <property type="organism name" value="human"/>
</dbReference>
<dbReference type="EvolutionaryTrace" id="P17812"/>
<dbReference type="GeneWiki" id="CTP_synthase_1"/>
<dbReference type="GenomeRNAi" id="1503"/>
<dbReference type="Pharos" id="P17812">
    <property type="development level" value="Tbio"/>
</dbReference>
<dbReference type="PRO" id="PR:P17812"/>
<dbReference type="Proteomes" id="UP000005640">
    <property type="component" value="Chromosome 1"/>
</dbReference>
<dbReference type="RNAct" id="P17812">
    <property type="molecule type" value="protein"/>
</dbReference>
<dbReference type="Bgee" id="ENSG00000171793">
    <property type="expression patterns" value="Expressed in parotid gland and 155 other cell types or tissues"/>
</dbReference>
<dbReference type="ExpressionAtlas" id="P17812">
    <property type="expression patterns" value="baseline and differential"/>
</dbReference>
<dbReference type="GO" id="GO:0097268">
    <property type="term" value="C:cytoophidium"/>
    <property type="evidence" value="ECO:0000314"/>
    <property type="project" value="UniProtKB"/>
</dbReference>
<dbReference type="GO" id="GO:0005737">
    <property type="term" value="C:cytoplasm"/>
    <property type="evidence" value="ECO:0000318"/>
    <property type="project" value="GO_Central"/>
</dbReference>
<dbReference type="GO" id="GO:0005829">
    <property type="term" value="C:cytosol"/>
    <property type="evidence" value="ECO:0000304"/>
    <property type="project" value="Reactome"/>
</dbReference>
<dbReference type="GO" id="GO:0016020">
    <property type="term" value="C:membrane"/>
    <property type="evidence" value="ECO:0007005"/>
    <property type="project" value="UniProtKB"/>
</dbReference>
<dbReference type="GO" id="GO:0005524">
    <property type="term" value="F:ATP binding"/>
    <property type="evidence" value="ECO:0007669"/>
    <property type="project" value="UniProtKB-KW"/>
</dbReference>
<dbReference type="GO" id="GO:0003883">
    <property type="term" value="F:CTP synthase activity"/>
    <property type="evidence" value="ECO:0000314"/>
    <property type="project" value="UniProtKB"/>
</dbReference>
<dbReference type="GO" id="GO:0042802">
    <property type="term" value="F:identical protein binding"/>
    <property type="evidence" value="ECO:0000353"/>
    <property type="project" value="IntAct"/>
</dbReference>
<dbReference type="GO" id="GO:0044210">
    <property type="term" value="P:'de novo' CTP biosynthetic process"/>
    <property type="evidence" value="ECO:0007669"/>
    <property type="project" value="UniProtKB-UniPathway"/>
</dbReference>
<dbReference type="GO" id="GO:0042100">
    <property type="term" value="P:B cell proliferation"/>
    <property type="evidence" value="ECO:0000315"/>
    <property type="project" value="UniProtKB"/>
</dbReference>
<dbReference type="GO" id="GO:0006241">
    <property type="term" value="P:CTP biosynthetic process"/>
    <property type="evidence" value="ECO:0000314"/>
    <property type="project" value="UniProtKB"/>
</dbReference>
<dbReference type="GO" id="GO:0006139">
    <property type="term" value="P:nucleobase-containing compound metabolic process"/>
    <property type="evidence" value="ECO:0000304"/>
    <property type="project" value="ProtInc"/>
</dbReference>
<dbReference type="GO" id="GO:0019856">
    <property type="term" value="P:pyrimidine nucleobase biosynthetic process"/>
    <property type="evidence" value="ECO:0000318"/>
    <property type="project" value="GO_Central"/>
</dbReference>
<dbReference type="GO" id="GO:0009410">
    <property type="term" value="P:response to xenobiotic stimulus"/>
    <property type="evidence" value="ECO:0000304"/>
    <property type="project" value="ProtInc"/>
</dbReference>
<dbReference type="GO" id="GO:0042098">
    <property type="term" value="P:T cell proliferation"/>
    <property type="evidence" value="ECO:0000315"/>
    <property type="project" value="UniProtKB"/>
</dbReference>
<dbReference type="CDD" id="cd03113">
    <property type="entry name" value="CTPS_N"/>
    <property type="match status" value="1"/>
</dbReference>
<dbReference type="CDD" id="cd01746">
    <property type="entry name" value="GATase1_CTP_Synthase"/>
    <property type="match status" value="1"/>
</dbReference>
<dbReference type="FunFam" id="3.40.50.300:FF:000207">
    <property type="entry name" value="CTP synthase"/>
    <property type="match status" value="1"/>
</dbReference>
<dbReference type="FunFam" id="3.40.50.880:FF:000005">
    <property type="entry name" value="CTP synthase"/>
    <property type="match status" value="1"/>
</dbReference>
<dbReference type="Gene3D" id="3.40.50.880">
    <property type="match status" value="1"/>
</dbReference>
<dbReference type="Gene3D" id="3.40.50.300">
    <property type="entry name" value="P-loop containing nucleotide triphosphate hydrolases"/>
    <property type="match status" value="1"/>
</dbReference>
<dbReference type="HAMAP" id="MF_01227">
    <property type="entry name" value="PyrG"/>
    <property type="match status" value="1"/>
</dbReference>
<dbReference type="InterPro" id="IPR029062">
    <property type="entry name" value="Class_I_gatase-like"/>
</dbReference>
<dbReference type="InterPro" id="IPR004468">
    <property type="entry name" value="CTP_synthase"/>
</dbReference>
<dbReference type="InterPro" id="IPR017456">
    <property type="entry name" value="CTP_synthase_N"/>
</dbReference>
<dbReference type="InterPro" id="IPR017926">
    <property type="entry name" value="GATASE"/>
</dbReference>
<dbReference type="InterPro" id="IPR033828">
    <property type="entry name" value="GATase1_CTP_Synthase"/>
</dbReference>
<dbReference type="InterPro" id="IPR027417">
    <property type="entry name" value="P-loop_NTPase"/>
</dbReference>
<dbReference type="NCBIfam" id="NF003792">
    <property type="entry name" value="PRK05380.1"/>
    <property type="match status" value="1"/>
</dbReference>
<dbReference type="NCBIfam" id="TIGR00337">
    <property type="entry name" value="PyrG"/>
    <property type="match status" value="1"/>
</dbReference>
<dbReference type="PANTHER" id="PTHR11550">
    <property type="entry name" value="CTP SYNTHASE"/>
    <property type="match status" value="1"/>
</dbReference>
<dbReference type="PANTHER" id="PTHR11550:SF8">
    <property type="entry name" value="CTP SYNTHASE 1"/>
    <property type="match status" value="1"/>
</dbReference>
<dbReference type="Pfam" id="PF06418">
    <property type="entry name" value="CTP_synth_N"/>
    <property type="match status" value="1"/>
</dbReference>
<dbReference type="Pfam" id="PF00117">
    <property type="entry name" value="GATase"/>
    <property type="match status" value="1"/>
</dbReference>
<dbReference type="SUPFAM" id="SSF52317">
    <property type="entry name" value="Class I glutamine amidotransferase-like"/>
    <property type="match status" value="1"/>
</dbReference>
<dbReference type="SUPFAM" id="SSF52540">
    <property type="entry name" value="P-loop containing nucleoside triphosphate hydrolases"/>
    <property type="match status" value="1"/>
</dbReference>
<dbReference type="PROSITE" id="PS51273">
    <property type="entry name" value="GATASE_TYPE_1"/>
    <property type="match status" value="1"/>
</dbReference>
<organism>
    <name type="scientific">Homo sapiens</name>
    <name type="common">Human</name>
    <dbReference type="NCBI Taxonomy" id="9606"/>
    <lineage>
        <taxon>Eukaryota</taxon>
        <taxon>Metazoa</taxon>
        <taxon>Chordata</taxon>
        <taxon>Craniata</taxon>
        <taxon>Vertebrata</taxon>
        <taxon>Euteleostomi</taxon>
        <taxon>Mammalia</taxon>
        <taxon>Eutheria</taxon>
        <taxon>Euarchontoglires</taxon>
        <taxon>Primates</taxon>
        <taxon>Haplorrhini</taxon>
        <taxon>Catarrhini</taxon>
        <taxon>Hominidae</taxon>
        <taxon>Homo</taxon>
    </lineage>
</organism>
<name>PYRG1_HUMAN</name>
<comment type="function">
    <text evidence="5 6">This enzyme is involved in the de novo synthesis of CTP, a precursor of DNA, RNA and phospholipids. Catalyzes the ATP-dependent amination of UTP to CTP with either L-glutamine or ammonia as a source of nitrogen. This enzyme and its product, CTP, play a crucial role in the proliferation of activated lymphocytes and therefore in immunity.</text>
</comment>
<comment type="catalytic activity">
    <reaction evidence="5 6">
        <text>UTP + L-glutamine + ATP + H2O = CTP + L-glutamate + ADP + phosphate + 2 H(+)</text>
        <dbReference type="Rhea" id="RHEA:26426"/>
        <dbReference type="ChEBI" id="CHEBI:15377"/>
        <dbReference type="ChEBI" id="CHEBI:15378"/>
        <dbReference type="ChEBI" id="CHEBI:29985"/>
        <dbReference type="ChEBI" id="CHEBI:30616"/>
        <dbReference type="ChEBI" id="CHEBI:37563"/>
        <dbReference type="ChEBI" id="CHEBI:43474"/>
        <dbReference type="ChEBI" id="CHEBI:46398"/>
        <dbReference type="ChEBI" id="CHEBI:58359"/>
        <dbReference type="ChEBI" id="CHEBI:456216"/>
        <dbReference type="EC" id="6.3.4.2"/>
    </reaction>
</comment>
<comment type="activity regulation">
    <text>Activated by GTP and inhibited by CTP.</text>
</comment>
<comment type="pathway">
    <text evidence="5 6">Pyrimidine metabolism; CTP biosynthesis via de novo pathway; CTP from UDP: step 2/2.</text>
</comment>
<comment type="interaction">
    <interactant intactId="EBI-1042983">
        <id>P17812</id>
    </interactant>
    <interactant intactId="EBI-1042983">
        <id>P17812</id>
        <label>CTPS1</label>
    </interactant>
    <organismsDiffer>false</organismsDiffer>
    <experiments>4</experiments>
</comment>
<comment type="interaction">
    <interactant intactId="EBI-1042983">
        <id>P17812</id>
    </interactant>
    <interactant intactId="EBI-740874">
        <id>Q9NRF8</id>
        <label>CTPS2</label>
    </interactant>
    <organismsDiffer>false</organismsDiffer>
    <experiments>6</experiments>
</comment>
<comment type="subcellular location">
    <subcellularLocation>
        <location evidence="7">Cytoplasm</location>
        <location evidence="7">Cytosol</location>
    </subcellularLocation>
    <text evidence="2 7">Mainly cytosolic but when active detected in long filamentous structures (PubMed:25223282). Co-localizes with TNK2 in the cytosolic filaments (By similarity).</text>
</comment>
<comment type="alternative products">
    <event type="alternative splicing"/>
    <isoform>
        <id>P17812-1</id>
        <name>1</name>
        <sequence type="displayed"/>
    </isoform>
    <isoform>
        <id>P17812-2</id>
        <name>2</name>
        <sequence type="described" ref="VSP_055827"/>
    </isoform>
</comment>
<comment type="tissue specificity">
    <text evidence="6">Widely expressed.</text>
</comment>
<comment type="induction">
    <text evidence="6">Up-regulated in T-cells and B-cells activated through the TCR and the BCR respectively (at protein level).</text>
</comment>
<comment type="disease" evidence="6">
    <disease id="DI-04159">
        <name>Immunodeficiency 24</name>
        <acronym>IMD24</acronym>
        <description>A life-threatening immunodeficiency, characterized by an impaired capacity of activated T and B cells to proliferate in response to antigen receptor-mediated activation. Patients have early onset of severe chronic viral infections, mostly caused by herpes viruses, including EBV and varicella zooster virus (VZV), and also suffer from recurrent encapsulated bacterial infections, a spectrum of infections typical of a combined deficiency of adaptive immunity.</description>
        <dbReference type="MIM" id="615897"/>
    </disease>
    <text evidence="6">The disease is caused by variants affecting the gene represented in this entry. A unique and recessive G to C mutation probably affecting a splice donor site at the junction of intron 17-18 and exon 18 has been identified in all patients. It results in expression of an abnormal transcript lacking exon 18 and a complete loss of the expression of the protein.</text>
</comment>
<comment type="similarity">
    <text evidence="9">Belongs to the CTP synthase family.</text>
</comment>
<keyword id="KW-0002">3D-structure</keyword>
<keyword id="KW-0007">Acetylation</keyword>
<keyword id="KW-0025">Alternative splicing</keyword>
<keyword id="KW-0067">ATP-binding</keyword>
<keyword id="KW-0963">Cytoplasm</keyword>
<keyword id="KW-0315">Glutamine amidotransferase</keyword>
<keyword id="KW-0391">Immunity</keyword>
<keyword id="KW-0436">Ligase</keyword>
<keyword id="KW-0547">Nucleotide-binding</keyword>
<keyword id="KW-0597">Phosphoprotein</keyword>
<keyword id="KW-1267">Proteomics identification</keyword>
<keyword id="KW-0665">Pyrimidine biosynthesis</keyword>
<keyword id="KW-1185">Reference proteome</keyword>
<accession>P17812</accession>
<accession>B4DR64</accession>
<accession>D3DPW1</accession>
<accession>Q5VW67</accession>
<accession>Q96GK6</accession>
<proteinExistence type="evidence at protein level"/>
<reference key="1">
    <citation type="journal article" date="1990" name="EMBO J.">
        <title>Molecular cloning of the human CTP synthetase gene by functional complementation with purified human metaphase chromosomes.</title>
        <authorList>
            <person name="Yamauchi M."/>
            <person name="Yamauchi N."/>
            <person name="Meuth M."/>
        </authorList>
    </citation>
    <scope>NUCLEOTIDE SEQUENCE [MRNA] (ISOFORM 1)</scope>
    <source>
        <tissue>Testis</tissue>
    </source>
</reference>
<reference key="2">
    <citation type="journal article" date="2004" name="Nat. Genet.">
        <title>Complete sequencing and characterization of 21,243 full-length human cDNAs.</title>
        <authorList>
            <person name="Ota T."/>
            <person name="Suzuki Y."/>
            <person name="Nishikawa T."/>
            <person name="Otsuki T."/>
            <person name="Sugiyama T."/>
            <person name="Irie R."/>
            <person name="Wakamatsu A."/>
            <person name="Hayashi K."/>
            <person name="Sato H."/>
            <person name="Nagai K."/>
            <person name="Kimura K."/>
            <person name="Makita H."/>
            <person name="Sekine M."/>
            <person name="Obayashi M."/>
            <person name="Nishi T."/>
            <person name="Shibahara T."/>
            <person name="Tanaka T."/>
            <person name="Ishii S."/>
            <person name="Yamamoto J."/>
            <person name="Saito K."/>
            <person name="Kawai Y."/>
            <person name="Isono Y."/>
            <person name="Nakamura Y."/>
            <person name="Nagahari K."/>
            <person name="Murakami K."/>
            <person name="Yasuda T."/>
            <person name="Iwayanagi T."/>
            <person name="Wagatsuma M."/>
            <person name="Shiratori A."/>
            <person name="Sudo H."/>
            <person name="Hosoiri T."/>
            <person name="Kaku Y."/>
            <person name="Kodaira H."/>
            <person name="Kondo H."/>
            <person name="Sugawara M."/>
            <person name="Takahashi M."/>
            <person name="Kanda K."/>
            <person name="Yokoi T."/>
            <person name="Furuya T."/>
            <person name="Kikkawa E."/>
            <person name="Omura Y."/>
            <person name="Abe K."/>
            <person name="Kamihara K."/>
            <person name="Katsuta N."/>
            <person name="Sato K."/>
            <person name="Tanikawa M."/>
            <person name="Yamazaki M."/>
            <person name="Ninomiya K."/>
            <person name="Ishibashi T."/>
            <person name="Yamashita H."/>
            <person name="Murakawa K."/>
            <person name="Fujimori K."/>
            <person name="Tanai H."/>
            <person name="Kimata M."/>
            <person name="Watanabe M."/>
            <person name="Hiraoka S."/>
            <person name="Chiba Y."/>
            <person name="Ishida S."/>
            <person name="Ono Y."/>
            <person name="Takiguchi S."/>
            <person name="Watanabe S."/>
            <person name="Yosida M."/>
            <person name="Hotuta T."/>
            <person name="Kusano J."/>
            <person name="Kanehori K."/>
            <person name="Takahashi-Fujii A."/>
            <person name="Hara H."/>
            <person name="Tanase T.-O."/>
            <person name="Nomura Y."/>
            <person name="Togiya S."/>
            <person name="Komai F."/>
            <person name="Hara R."/>
            <person name="Takeuchi K."/>
            <person name="Arita M."/>
            <person name="Imose N."/>
            <person name="Musashino K."/>
            <person name="Yuuki H."/>
            <person name="Oshima A."/>
            <person name="Sasaki N."/>
            <person name="Aotsuka S."/>
            <person name="Yoshikawa Y."/>
            <person name="Matsunawa H."/>
            <person name="Ichihara T."/>
            <person name="Shiohata N."/>
            <person name="Sano S."/>
            <person name="Moriya S."/>
            <person name="Momiyama H."/>
            <person name="Satoh N."/>
            <person name="Takami S."/>
            <person name="Terashima Y."/>
            <person name="Suzuki O."/>
            <person name="Nakagawa S."/>
            <person name="Senoh A."/>
            <person name="Mizoguchi H."/>
            <person name="Goto Y."/>
            <person name="Shimizu F."/>
            <person name="Wakebe H."/>
            <person name="Hishigaki H."/>
            <person name="Watanabe T."/>
            <person name="Sugiyama A."/>
            <person name="Takemoto M."/>
            <person name="Kawakami B."/>
            <person name="Yamazaki M."/>
            <person name="Watanabe K."/>
            <person name="Kumagai A."/>
            <person name="Itakura S."/>
            <person name="Fukuzumi Y."/>
            <person name="Fujimori Y."/>
            <person name="Komiyama M."/>
            <person name="Tashiro H."/>
            <person name="Tanigami A."/>
            <person name="Fujiwara T."/>
            <person name="Ono T."/>
            <person name="Yamada K."/>
            <person name="Fujii Y."/>
            <person name="Ozaki K."/>
            <person name="Hirao M."/>
            <person name="Ohmori Y."/>
            <person name="Kawabata A."/>
            <person name="Hikiji T."/>
            <person name="Kobatake N."/>
            <person name="Inagaki H."/>
            <person name="Ikema Y."/>
            <person name="Okamoto S."/>
            <person name="Okitani R."/>
            <person name="Kawakami T."/>
            <person name="Noguchi S."/>
            <person name="Itoh T."/>
            <person name="Shigeta K."/>
            <person name="Senba T."/>
            <person name="Matsumura K."/>
            <person name="Nakajima Y."/>
            <person name="Mizuno T."/>
            <person name="Morinaga M."/>
            <person name="Sasaki M."/>
            <person name="Togashi T."/>
            <person name="Oyama M."/>
            <person name="Hata H."/>
            <person name="Watanabe M."/>
            <person name="Komatsu T."/>
            <person name="Mizushima-Sugano J."/>
            <person name="Satoh T."/>
            <person name="Shirai Y."/>
            <person name="Takahashi Y."/>
            <person name="Nakagawa K."/>
            <person name="Okumura K."/>
            <person name="Nagase T."/>
            <person name="Nomura N."/>
            <person name="Kikuchi H."/>
            <person name="Masuho Y."/>
            <person name="Yamashita R."/>
            <person name="Nakai K."/>
            <person name="Yada T."/>
            <person name="Nakamura Y."/>
            <person name="Ohara O."/>
            <person name="Isogai T."/>
            <person name="Sugano S."/>
        </authorList>
    </citation>
    <scope>NUCLEOTIDE SEQUENCE [LARGE SCALE MRNA] (ISOFORM 2)</scope>
</reference>
<reference key="3">
    <citation type="journal article" date="2006" name="Nature">
        <title>The DNA sequence and biological annotation of human chromosome 1.</title>
        <authorList>
            <person name="Gregory S.G."/>
            <person name="Barlow K.F."/>
            <person name="McLay K.E."/>
            <person name="Kaul R."/>
            <person name="Swarbreck D."/>
            <person name="Dunham A."/>
            <person name="Scott C.E."/>
            <person name="Howe K.L."/>
            <person name="Woodfine K."/>
            <person name="Spencer C.C.A."/>
            <person name="Jones M.C."/>
            <person name="Gillson C."/>
            <person name="Searle S."/>
            <person name="Zhou Y."/>
            <person name="Kokocinski F."/>
            <person name="McDonald L."/>
            <person name="Evans R."/>
            <person name="Phillips K."/>
            <person name="Atkinson A."/>
            <person name="Cooper R."/>
            <person name="Jones C."/>
            <person name="Hall R.E."/>
            <person name="Andrews T.D."/>
            <person name="Lloyd C."/>
            <person name="Ainscough R."/>
            <person name="Almeida J.P."/>
            <person name="Ambrose K.D."/>
            <person name="Anderson F."/>
            <person name="Andrew R.W."/>
            <person name="Ashwell R.I.S."/>
            <person name="Aubin K."/>
            <person name="Babbage A.K."/>
            <person name="Bagguley C.L."/>
            <person name="Bailey J."/>
            <person name="Beasley H."/>
            <person name="Bethel G."/>
            <person name="Bird C.P."/>
            <person name="Bray-Allen S."/>
            <person name="Brown J.Y."/>
            <person name="Brown A.J."/>
            <person name="Buckley D."/>
            <person name="Burton J."/>
            <person name="Bye J."/>
            <person name="Carder C."/>
            <person name="Chapman J.C."/>
            <person name="Clark S.Y."/>
            <person name="Clarke G."/>
            <person name="Clee C."/>
            <person name="Cobley V."/>
            <person name="Collier R.E."/>
            <person name="Corby N."/>
            <person name="Coville G.J."/>
            <person name="Davies J."/>
            <person name="Deadman R."/>
            <person name="Dunn M."/>
            <person name="Earthrowl M."/>
            <person name="Ellington A.G."/>
            <person name="Errington H."/>
            <person name="Frankish A."/>
            <person name="Frankland J."/>
            <person name="French L."/>
            <person name="Garner P."/>
            <person name="Garnett J."/>
            <person name="Gay L."/>
            <person name="Ghori M.R.J."/>
            <person name="Gibson R."/>
            <person name="Gilby L.M."/>
            <person name="Gillett W."/>
            <person name="Glithero R.J."/>
            <person name="Grafham D.V."/>
            <person name="Griffiths C."/>
            <person name="Griffiths-Jones S."/>
            <person name="Grocock R."/>
            <person name="Hammond S."/>
            <person name="Harrison E.S.I."/>
            <person name="Hart E."/>
            <person name="Haugen E."/>
            <person name="Heath P.D."/>
            <person name="Holmes S."/>
            <person name="Holt K."/>
            <person name="Howden P.J."/>
            <person name="Hunt A.R."/>
            <person name="Hunt S.E."/>
            <person name="Hunter G."/>
            <person name="Isherwood J."/>
            <person name="James R."/>
            <person name="Johnson C."/>
            <person name="Johnson D."/>
            <person name="Joy A."/>
            <person name="Kay M."/>
            <person name="Kershaw J.K."/>
            <person name="Kibukawa M."/>
            <person name="Kimberley A.M."/>
            <person name="King A."/>
            <person name="Knights A.J."/>
            <person name="Lad H."/>
            <person name="Laird G."/>
            <person name="Lawlor S."/>
            <person name="Leongamornlert D.A."/>
            <person name="Lloyd D.M."/>
            <person name="Loveland J."/>
            <person name="Lovell J."/>
            <person name="Lush M.J."/>
            <person name="Lyne R."/>
            <person name="Martin S."/>
            <person name="Mashreghi-Mohammadi M."/>
            <person name="Matthews L."/>
            <person name="Matthews N.S.W."/>
            <person name="McLaren S."/>
            <person name="Milne S."/>
            <person name="Mistry S."/>
            <person name="Moore M.J.F."/>
            <person name="Nickerson T."/>
            <person name="O'Dell C.N."/>
            <person name="Oliver K."/>
            <person name="Palmeiri A."/>
            <person name="Palmer S.A."/>
            <person name="Parker A."/>
            <person name="Patel D."/>
            <person name="Pearce A.V."/>
            <person name="Peck A.I."/>
            <person name="Pelan S."/>
            <person name="Phelps K."/>
            <person name="Phillimore B.J."/>
            <person name="Plumb R."/>
            <person name="Rajan J."/>
            <person name="Raymond C."/>
            <person name="Rouse G."/>
            <person name="Saenphimmachak C."/>
            <person name="Sehra H.K."/>
            <person name="Sheridan E."/>
            <person name="Shownkeen R."/>
            <person name="Sims S."/>
            <person name="Skuce C.D."/>
            <person name="Smith M."/>
            <person name="Steward C."/>
            <person name="Subramanian S."/>
            <person name="Sycamore N."/>
            <person name="Tracey A."/>
            <person name="Tromans A."/>
            <person name="Van Helmond Z."/>
            <person name="Wall M."/>
            <person name="Wallis J.M."/>
            <person name="White S."/>
            <person name="Whitehead S.L."/>
            <person name="Wilkinson J.E."/>
            <person name="Willey D.L."/>
            <person name="Williams H."/>
            <person name="Wilming L."/>
            <person name="Wray P.W."/>
            <person name="Wu Z."/>
            <person name="Coulson A."/>
            <person name="Vaudin M."/>
            <person name="Sulston J.E."/>
            <person name="Durbin R.M."/>
            <person name="Hubbard T."/>
            <person name="Wooster R."/>
            <person name="Dunham I."/>
            <person name="Carter N.P."/>
            <person name="McVean G."/>
            <person name="Ross M.T."/>
            <person name="Harrow J."/>
            <person name="Olson M.V."/>
            <person name="Beck S."/>
            <person name="Rogers J."/>
            <person name="Bentley D.R."/>
        </authorList>
    </citation>
    <scope>NUCLEOTIDE SEQUENCE [LARGE SCALE GENOMIC DNA]</scope>
</reference>
<reference key="4">
    <citation type="submission" date="2005-09" db="EMBL/GenBank/DDBJ databases">
        <authorList>
            <person name="Mural R.J."/>
            <person name="Istrail S."/>
            <person name="Sutton G.G."/>
            <person name="Florea L."/>
            <person name="Halpern A.L."/>
            <person name="Mobarry C.M."/>
            <person name="Lippert R."/>
            <person name="Walenz B."/>
            <person name="Shatkay H."/>
            <person name="Dew I."/>
            <person name="Miller J.R."/>
            <person name="Flanigan M.J."/>
            <person name="Edwards N.J."/>
            <person name="Bolanos R."/>
            <person name="Fasulo D."/>
            <person name="Halldorsson B.V."/>
            <person name="Hannenhalli S."/>
            <person name="Turner R."/>
            <person name="Yooseph S."/>
            <person name="Lu F."/>
            <person name="Nusskern D.R."/>
            <person name="Shue B.C."/>
            <person name="Zheng X.H."/>
            <person name="Zhong F."/>
            <person name="Delcher A.L."/>
            <person name="Huson D.H."/>
            <person name="Kravitz S.A."/>
            <person name="Mouchard L."/>
            <person name="Reinert K."/>
            <person name="Remington K.A."/>
            <person name="Clark A.G."/>
            <person name="Waterman M.S."/>
            <person name="Eichler E.E."/>
            <person name="Adams M.D."/>
            <person name="Hunkapiller M.W."/>
            <person name="Myers E.W."/>
            <person name="Venter J.C."/>
        </authorList>
    </citation>
    <scope>NUCLEOTIDE SEQUENCE [LARGE SCALE GENOMIC DNA]</scope>
</reference>
<reference key="5">
    <citation type="journal article" date="2004" name="Genome Res.">
        <title>The status, quality, and expansion of the NIH full-length cDNA project: the Mammalian Gene Collection (MGC).</title>
        <authorList>
            <consortium name="The MGC Project Team"/>
        </authorList>
    </citation>
    <scope>NUCLEOTIDE SEQUENCE [LARGE SCALE MRNA] (ISOFORM 1)</scope>
    <scope>VARIANT ILE-571</scope>
    <source>
        <tissue>Eye</tissue>
    </source>
</reference>
<reference key="6">
    <citation type="journal article" date="2005" name="J. Biol. Chem.">
        <title>Expression of human CTP synthetase in Saccharomyces cerevisiae reveals phosphorylation by protein kinase A.</title>
        <authorList>
            <person name="Han G.-S."/>
            <person name="Sreenivas A."/>
            <person name="Choi M.-G."/>
            <person name="Chang Y.-F."/>
            <person name="Martin S.S."/>
            <person name="Baldwin E.P."/>
            <person name="Carman G.M."/>
        </authorList>
    </citation>
    <scope>FUNCTION</scope>
    <scope>CATALYTIC ACTIVITY</scope>
    <scope>PATHWAY</scope>
</reference>
<reference key="7">
    <citation type="journal article" date="2006" name="Cell">
        <title>Global, in vivo, and site-specific phosphorylation dynamics in signaling networks.</title>
        <authorList>
            <person name="Olsen J.V."/>
            <person name="Blagoev B."/>
            <person name="Gnad F."/>
            <person name="Macek B."/>
            <person name="Kumar C."/>
            <person name="Mortensen P."/>
            <person name="Mann M."/>
        </authorList>
    </citation>
    <scope>IDENTIFICATION BY MASS SPECTROMETRY [LARGE SCALE ANALYSIS]</scope>
    <source>
        <tissue>Cervix carcinoma</tissue>
    </source>
</reference>
<reference key="8">
    <citation type="journal article" date="2006" name="Nat. Biotechnol.">
        <title>A probability-based approach for high-throughput protein phosphorylation analysis and site localization.</title>
        <authorList>
            <person name="Beausoleil S.A."/>
            <person name="Villen J."/>
            <person name="Gerber S.A."/>
            <person name="Rush J."/>
            <person name="Gygi S.P."/>
        </authorList>
    </citation>
    <scope>IDENTIFICATION BY MASS SPECTROMETRY [LARGE SCALE ANALYSIS]</scope>
    <source>
        <tissue>Cervix carcinoma</tissue>
    </source>
</reference>
<reference key="9">
    <citation type="journal article" date="2007" name="Electrophoresis">
        <title>Toward a global characterization of the phosphoproteome in prostate cancer cells: identification of phosphoproteins in the LNCaP cell line.</title>
        <authorList>
            <person name="Giorgianni F."/>
            <person name="Zhao Y."/>
            <person name="Desiderio D.M."/>
            <person name="Beranova-Giorgianni S."/>
        </authorList>
    </citation>
    <scope>IDENTIFICATION BY MASS SPECTROMETRY [LARGE SCALE ANALYSIS]</scope>
    <source>
        <tissue>Prostate cancer</tissue>
    </source>
</reference>
<reference key="10">
    <citation type="journal article" date="2008" name="J. Proteome Res.">
        <title>Combining protein-based IMAC, peptide-based IMAC, and MudPIT for efficient phosphoproteomic analysis.</title>
        <authorList>
            <person name="Cantin G.T."/>
            <person name="Yi W."/>
            <person name="Lu B."/>
            <person name="Park S.K."/>
            <person name="Xu T."/>
            <person name="Lee J.-D."/>
            <person name="Yates J.R. III"/>
        </authorList>
    </citation>
    <scope>IDENTIFICATION BY MASS SPECTROMETRY [LARGE SCALE ANALYSIS]</scope>
    <source>
        <tissue>Cervix carcinoma</tissue>
    </source>
</reference>
<reference key="11">
    <citation type="journal article" date="2008" name="J. Proteome Res.">
        <title>Phosphoproteome of resting human platelets.</title>
        <authorList>
            <person name="Zahedi R.P."/>
            <person name="Lewandrowski U."/>
            <person name="Wiesner J."/>
            <person name="Wortelkamp S."/>
            <person name="Moebius J."/>
            <person name="Schuetz C."/>
            <person name="Walter U."/>
            <person name="Gambaryan S."/>
            <person name="Sickmann A."/>
        </authorList>
    </citation>
    <scope>IDENTIFICATION BY MASS SPECTROMETRY [LARGE SCALE ANALYSIS]</scope>
    <source>
        <tissue>Platelet</tissue>
    </source>
</reference>
<reference key="12">
    <citation type="journal article" date="2008" name="Mol. Cell">
        <title>Kinase-selective enrichment enables quantitative phosphoproteomics of the kinome across the cell cycle.</title>
        <authorList>
            <person name="Daub H."/>
            <person name="Olsen J.V."/>
            <person name="Bairlein M."/>
            <person name="Gnad F."/>
            <person name="Oppermann F.S."/>
            <person name="Korner R."/>
            <person name="Greff Z."/>
            <person name="Keri G."/>
            <person name="Stemmann O."/>
            <person name="Mann M."/>
        </authorList>
    </citation>
    <scope>IDENTIFICATION BY MASS SPECTROMETRY [LARGE SCALE ANALYSIS]</scope>
    <source>
        <tissue>Cervix carcinoma</tissue>
    </source>
</reference>
<reference key="13">
    <citation type="journal article" date="2008" name="Proc. Natl. Acad. Sci. U.S.A.">
        <title>A quantitative atlas of mitotic phosphorylation.</title>
        <authorList>
            <person name="Dephoure N."/>
            <person name="Zhou C."/>
            <person name="Villen J."/>
            <person name="Beausoleil S.A."/>
            <person name="Bakalarski C.E."/>
            <person name="Elledge S.J."/>
            <person name="Gygi S.P."/>
        </authorList>
    </citation>
    <scope>PHOSPHORYLATION [LARGE SCALE ANALYSIS] AT SER-568; SER-571; SER-573; SER-574; SER-575 AND SER-587</scope>
    <scope>IDENTIFICATION BY MASS SPECTROMETRY [LARGE SCALE ANALYSIS]</scope>
    <source>
        <tissue>Cervix carcinoma</tissue>
    </source>
</reference>
<reference key="14">
    <citation type="journal article" date="2009" name="Anal. Chem.">
        <title>Lys-N and trypsin cover complementary parts of the phosphoproteome in a refined SCX-based approach.</title>
        <authorList>
            <person name="Gauci S."/>
            <person name="Helbig A.O."/>
            <person name="Slijper M."/>
            <person name="Krijgsveld J."/>
            <person name="Heck A.J."/>
            <person name="Mohammed S."/>
        </authorList>
    </citation>
    <scope>IDENTIFICATION BY MASS SPECTROMETRY [LARGE SCALE ANALYSIS]</scope>
</reference>
<reference key="15">
    <citation type="journal article" date="2009" name="Sci. Signal.">
        <title>Quantitative phosphoproteomic analysis of T cell receptor signaling reveals system-wide modulation of protein-protein interactions.</title>
        <authorList>
            <person name="Mayya V."/>
            <person name="Lundgren D.H."/>
            <person name="Hwang S.-I."/>
            <person name="Rezaul K."/>
            <person name="Wu L."/>
            <person name="Eng J.K."/>
            <person name="Rodionov V."/>
            <person name="Han D.K."/>
        </authorList>
    </citation>
    <scope>PHOSPHORYLATION [LARGE SCALE ANALYSIS] AT SER-571; SER-574 AND SER-575</scope>
    <scope>IDENTIFICATION BY MASS SPECTROMETRY [LARGE SCALE ANALYSIS]</scope>
    <source>
        <tissue>Leukemic T-cell</tissue>
    </source>
</reference>
<reference key="16">
    <citation type="journal article" date="2009" name="Science">
        <title>Lysine acetylation targets protein complexes and co-regulates major cellular functions.</title>
        <authorList>
            <person name="Choudhary C."/>
            <person name="Kumar C."/>
            <person name="Gnad F."/>
            <person name="Nielsen M.L."/>
            <person name="Rehman M."/>
            <person name="Walther T.C."/>
            <person name="Olsen J.V."/>
            <person name="Mann M."/>
        </authorList>
    </citation>
    <scope>ACETYLATION [LARGE SCALE ANALYSIS] AT LYS-100</scope>
    <scope>IDENTIFICATION BY MASS SPECTROMETRY [LARGE SCALE ANALYSIS]</scope>
</reference>
<reference key="17">
    <citation type="journal article" date="2010" name="Sci. Signal.">
        <title>Quantitative phosphoproteomics reveals widespread full phosphorylation site occupancy during mitosis.</title>
        <authorList>
            <person name="Olsen J.V."/>
            <person name="Vermeulen M."/>
            <person name="Santamaria A."/>
            <person name="Kumar C."/>
            <person name="Miller M.L."/>
            <person name="Jensen L.J."/>
            <person name="Gnad F."/>
            <person name="Cox J."/>
            <person name="Jensen T.S."/>
            <person name="Nigg E.A."/>
            <person name="Brunak S."/>
            <person name="Mann M."/>
        </authorList>
    </citation>
    <scope>PHOSPHORYLATION [LARGE SCALE ANALYSIS] AT SER-574 AND SER-575</scope>
    <scope>IDENTIFICATION BY MASS SPECTROMETRY [LARGE SCALE ANALYSIS]</scope>
    <source>
        <tissue>Cervix carcinoma</tissue>
    </source>
</reference>
<reference key="18">
    <citation type="journal article" date="2011" name="BMC Syst. Biol.">
        <title>Initial characterization of the human central proteome.</title>
        <authorList>
            <person name="Burkard T.R."/>
            <person name="Planyavsky M."/>
            <person name="Kaupe I."/>
            <person name="Breitwieser F.P."/>
            <person name="Buerckstuemmer T."/>
            <person name="Bennett K.L."/>
            <person name="Superti-Furga G."/>
            <person name="Colinge J."/>
        </authorList>
    </citation>
    <scope>IDENTIFICATION BY MASS SPECTROMETRY [LARGE SCALE ANALYSIS]</scope>
</reference>
<reference key="19">
    <citation type="journal article" date="2011" name="Sci. Signal.">
        <title>System-wide temporal characterization of the proteome and phosphoproteome of human embryonic stem cell differentiation.</title>
        <authorList>
            <person name="Rigbolt K.T."/>
            <person name="Prokhorova T.A."/>
            <person name="Akimov V."/>
            <person name="Henningsen J."/>
            <person name="Johansen P.T."/>
            <person name="Kratchmarova I."/>
            <person name="Kassem M."/>
            <person name="Mann M."/>
            <person name="Olsen J.V."/>
            <person name="Blagoev B."/>
        </authorList>
    </citation>
    <scope>PHOSPHORYLATION [LARGE SCALE ANALYSIS] AT SER-562; SER-573 AND SER-575</scope>
    <scope>IDENTIFICATION BY MASS SPECTROMETRY [LARGE SCALE ANALYSIS]</scope>
</reference>
<reference key="20">
    <citation type="journal article" date="2013" name="J. Proteome Res.">
        <title>Toward a comprehensive characterization of a human cancer cell phosphoproteome.</title>
        <authorList>
            <person name="Zhou H."/>
            <person name="Di Palma S."/>
            <person name="Preisinger C."/>
            <person name="Peng M."/>
            <person name="Polat A.N."/>
            <person name="Heck A.J."/>
            <person name="Mohammed S."/>
        </authorList>
    </citation>
    <scope>PHOSPHORYLATION [LARGE SCALE ANALYSIS] AT SER-575</scope>
    <scope>IDENTIFICATION BY MASS SPECTROMETRY [LARGE SCALE ANALYSIS]</scope>
    <source>
        <tissue>Cervix carcinoma</tissue>
        <tissue>Erythroleukemia</tissue>
    </source>
</reference>
<reference key="21">
    <citation type="journal article" date="2014" name="Nature">
        <title>CTP synthase 1 deficiency in humans reveals its central role in lymphocyte proliferation.</title>
        <authorList>
            <person name="Martin E."/>
            <person name="Palmic N."/>
            <person name="Sanquer S."/>
            <person name="Lenoir C."/>
            <person name="Hauck F."/>
            <person name="Mongellaz C."/>
            <person name="Fabrega S."/>
            <person name="Nitschke P."/>
            <person name="Esposti M.D."/>
            <person name="Schwartzentruber J."/>
            <person name="Taylor N."/>
            <person name="Majewski J."/>
            <person name="Jabado N."/>
            <person name="Wynn R.F."/>
            <person name="Picard C."/>
            <person name="Fischer A."/>
            <person name="Arkwright P.D."/>
            <person name="Latour S."/>
        </authorList>
    </citation>
    <scope>FUNCTION</scope>
    <scope>CATALYTIC ACTIVITY</scope>
    <scope>PATHWAY</scope>
    <scope>TISSUE SPECIFICITY</scope>
    <scope>INDUCTION</scope>
    <scope>INVOLVEMENT IN IMD24</scope>
</reference>
<reference key="22">
    <citation type="journal article" date="2014" name="EMBO Rep.">
        <title>Ack kinase regulates CTP synthase filaments during Drosophila oogenesis.</title>
        <authorList>
            <person name="Strochlic T.I."/>
            <person name="Stavrides K.P."/>
            <person name="Thomas S.V."/>
            <person name="Nicolas E."/>
            <person name="O'Reilly A.M."/>
            <person name="Peterson J.R."/>
        </authorList>
    </citation>
    <scope>SUBCELLULAR LOCATION</scope>
    <scope>MUTAGENESIS OF GLU-161</scope>
</reference>
<reference key="23">
    <citation type="journal article" date="2006" name="Acta Crystallogr. F">
        <title>Structure of the synthetase domain of human CTP synthetase, a target for anticancer therapy.</title>
        <authorList>
            <person name="Kursula P."/>
            <person name="Flodin S."/>
            <person name="Ehn M."/>
            <person name="Hammarstrom M."/>
            <person name="Schuler H."/>
            <person name="Nordlund P."/>
            <person name="Stenmark P."/>
        </authorList>
    </citation>
    <scope>X-RAY CRYSTALLOGRAPHY (2.8 ANGSTROMS) OF 1-272</scope>
</reference>